<sequence length="176" mass="19966">MLVNSLIVILSVIAMEGIAAFTHRYIMHGWGWRWHESHHTPRKGVFELNDLFAVVFAGVAIALIAVGTAGVWPLQWIGCGMTVYGLLYFLVHDGLVHQRWPFHWIPRRGYLKRLYVAHRLHHAVRGREGCVSFGFIYARKPADLQAILRERHGRPPKRDAAKDRPDAASPSSSSPE</sequence>
<name>CRTZ_PSEVU</name>
<organism>
    <name type="scientific">Pseudescherichia vulneris</name>
    <name type="common">Escherichia vulneris</name>
    <dbReference type="NCBI Taxonomy" id="566"/>
    <lineage>
        <taxon>Bacteria</taxon>
        <taxon>Pseudomonadati</taxon>
        <taxon>Pseudomonadota</taxon>
        <taxon>Gammaproteobacteria</taxon>
        <taxon>Enterobacterales</taxon>
        <taxon>Enterobacteriaceae</taxon>
        <taxon>Pseudescherichia</taxon>
    </lineage>
</organism>
<comment type="function">
    <text>Catalyzes the hydroxylation reaction from beta-carotene to zeaxanthin.</text>
</comment>
<comment type="pathway">
    <text>Carotenoid biosynthesis; zeaxanthin biosynthesis.</text>
</comment>
<comment type="similarity">
    <text evidence="3">Belongs to the sterol desaturase family.</text>
</comment>
<proteinExistence type="inferred from homology"/>
<evidence type="ECO:0000255" key="1"/>
<evidence type="ECO:0000256" key="2">
    <source>
        <dbReference type="SAM" id="MobiDB-lite"/>
    </source>
</evidence>
<evidence type="ECO:0000305" key="3"/>
<accession>Q01332</accession>
<feature type="chain" id="PRO_0000079378" description="Beta-carotene hydroxylase">
    <location>
        <begin position="1"/>
        <end position="176"/>
    </location>
</feature>
<feature type="domain" description="Fatty acid hydroxylase" evidence="1">
    <location>
        <begin position="10"/>
        <end position="126"/>
    </location>
</feature>
<feature type="region of interest" description="Disordered" evidence="2">
    <location>
        <begin position="152"/>
        <end position="176"/>
    </location>
</feature>
<feature type="compositionally biased region" description="Basic and acidic residues" evidence="2">
    <location>
        <begin position="156"/>
        <end position="166"/>
    </location>
</feature>
<feature type="compositionally biased region" description="Low complexity" evidence="2">
    <location>
        <begin position="167"/>
        <end position="176"/>
    </location>
</feature>
<reference key="1">
    <citation type="journal article" date="1993" name="FEBS Lett.">
        <title>In vitro expression and activity of lycopene cyclase and beta-carotene hydroxylase from Erwinia herbicola.</title>
        <authorList>
            <person name="Hundle B.S."/>
            <person name="O'Brien D.A."/>
            <person name="Beyer P."/>
            <person name="Kleinig H."/>
            <person name="Hearst J.E."/>
        </authorList>
    </citation>
    <scope>NUCLEOTIDE SEQUENCE [GENOMIC DNA]</scope>
    <source>
        <strain>ATCC 39368 / Eho10</strain>
    </source>
</reference>
<reference key="2">
    <citation type="journal article" date="1994" name="Mol. Gen. Genet.">
        <title>Functional assignment of Erwinia herbicola Eho10 carotenoid genes expressed in Escherichia coli.</title>
        <authorList>
            <person name="Hundle B."/>
            <person name="Alberti M."/>
            <person name="Nievelstein V."/>
            <person name="Beyer P."/>
            <person name="Kleinig H."/>
            <person name="Armstrong G.A."/>
            <person name="Burke D.H."/>
            <person name="Hearst J.E."/>
        </authorList>
    </citation>
    <scope>NUCLEOTIDE SEQUENCE [GENOMIC DNA]</scope>
    <source>
        <strain>ATCC 39368 / Eho10</strain>
    </source>
</reference>
<reference key="3">
    <citation type="submission" date="1993-06" db="EMBL/GenBank/DDBJ databases">
        <authorList>
            <person name="Liu S.T."/>
        </authorList>
    </citation>
    <scope>NUCLEOTIDE SEQUENCE [GENOMIC DNA]</scope>
    <source>
        <strain>ATCC 39368 / Eho10</strain>
    </source>
</reference>
<gene>
    <name type="primary">crtZ</name>
    <name type="synonym">crtH</name>
</gene>
<protein>
    <recommendedName>
        <fullName>Beta-carotene hydroxylase</fullName>
        <ecNumber>1.-.-.-</ecNumber>
    </recommendedName>
</protein>
<keyword id="KW-0125">Carotenoid biosynthesis</keyword>
<keyword id="KW-0560">Oxidoreductase</keyword>
<dbReference type="EC" id="1.-.-.-"/>
<dbReference type="EMBL" id="M87280">
    <property type="protein sequence ID" value="AAA64983.1"/>
    <property type="molecule type" value="Genomic_DNA"/>
</dbReference>
<dbReference type="EMBL" id="L17139">
    <property type="protein sequence ID" value="AAA24816.1"/>
    <property type="molecule type" value="Genomic_DNA"/>
</dbReference>
<dbReference type="PIR" id="S52982">
    <property type="entry name" value="S52982"/>
</dbReference>
<dbReference type="RefSeq" id="WP_042387980.1">
    <property type="nucleotide sequence ID" value="NZ_JBBLYX010000006.1"/>
</dbReference>
<dbReference type="UniPathway" id="UPA00843"/>
<dbReference type="GO" id="GO:0010291">
    <property type="term" value="F:beta-carotene 3-hydroxylase activity"/>
    <property type="evidence" value="ECO:0007669"/>
    <property type="project" value="TreeGrafter"/>
</dbReference>
<dbReference type="GO" id="GO:0005506">
    <property type="term" value="F:iron ion binding"/>
    <property type="evidence" value="ECO:0007669"/>
    <property type="project" value="InterPro"/>
</dbReference>
<dbReference type="GO" id="GO:0016119">
    <property type="term" value="P:carotene metabolic process"/>
    <property type="evidence" value="ECO:0007669"/>
    <property type="project" value="TreeGrafter"/>
</dbReference>
<dbReference type="GO" id="GO:0016123">
    <property type="term" value="P:xanthophyll biosynthetic process"/>
    <property type="evidence" value="ECO:0007669"/>
    <property type="project" value="TreeGrafter"/>
</dbReference>
<dbReference type="InterPro" id="IPR045019">
    <property type="entry name" value="BETA-OHASE-like"/>
</dbReference>
<dbReference type="InterPro" id="IPR006694">
    <property type="entry name" value="Fatty_acid_hydroxylase"/>
</dbReference>
<dbReference type="PANTHER" id="PTHR31899">
    <property type="entry name" value="BETA-CAROTENE 3-HYDROXYLASE 1, CHLOROPLASTIC"/>
    <property type="match status" value="1"/>
</dbReference>
<dbReference type="PANTHER" id="PTHR31899:SF9">
    <property type="entry name" value="BETA-CAROTENE 3-HYDROXYLASE 1, CHLOROPLASTIC"/>
    <property type="match status" value="1"/>
</dbReference>
<dbReference type="Pfam" id="PF04116">
    <property type="entry name" value="FA_hydroxylase"/>
    <property type="match status" value="1"/>
</dbReference>